<proteinExistence type="evidence at transcript level"/>
<accession>Q8R2S9</accession>
<accession>Q9CYC4</accession>
<protein>
    <recommendedName>
        <fullName>Actin-related protein 8</fullName>
    </recommendedName>
</protein>
<reference key="1">
    <citation type="journal article" date="2005" name="Science">
        <title>The transcriptional landscape of the mammalian genome.</title>
        <authorList>
            <person name="Carninci P."/>
            <person name="Kasukawa T."/>
            <person name="Katayama S."/>
            <person name="Gough J."/>
            <person name="Frith M.C."/>
            <person name="Maeda N."/>
            <person name="Oyama R."/>
            <person name="Ravasi T."/>
            <person name="Lenhard B."/>
            <person name="Wells C."/>
            <person name="Kodzius R."/>
            <person name="Shimokawa K."/>
            <person name="Bajic V.B."/>
            <person name="Brenner S.E."/>
            <person name="Batalov S."/>
            <person name="Forrest A.R."/>
            <person name="Zavolan M."/>
            <person name="Davis M.J."/>
            <person name="Wilming L.G."/>
            <person name="Aidinis V."/>
            <person name="Allen J.E."/>
            <person name="Ambesi-Impiombato A."/>
            <person name="Apweiler R."/>
            <person name="Aturaliya R.N."/>
            <person name="Bailey T.L."/>
            <person name="Bansal M."/>
            <person name="Baxter L."/>
            <person name="Beisel K.W."/>
            <person name="Bersano T."/>
            <person name="Bono H."/>
            <person name="Chalk A.M."/>
            <person name="Chiu K.P."/>
            <person name="Choudhary V."/>
            <person name="Christoffels A."/>
            <person name="Clutterbuck D.R."/>
            <person name="Crowe M.L."/>
            <person name="Dalla E."/>
            <person name="Dalrymple B.P."/>
            <person name="de Bono B."/>
            <person name="Della Gatta G."/>
            <person name="di Bernardo D."/>
            <person name="Down T."/>
            <person name="Engstrom P."/>
            <person name="Fagiolini M."/>
            <person name="Faulkner G."/>
            <person name="Fletcher C.F."/>
            <person name="Fukushima T."/>
            <person name="Furuno M."/>
            <person name="Futaki S."/>
            <person name="Gariboldi M."/>
            <person name="Georgii-Hemming P."/>
            <person name="Gingeras T.R."/>
            <person name="Gojobori T."/>
            <person name="Green R.E."/>
            <person name="Gustincich S."/>
            <person name="Harbers M."/>
            <person name="Hayashi Y."/>
            <person name="Hensch T.K."/>
            <person name="Hirokawa N."/>
            <person name="Hill D."/>
            <person name="Huminiecki L."/>
            <person name="Iacono M."/>
            <person name="Ikeo K."/>
            <person name="Iwama A."/>
            <person name="Ishikawa T."/>
            <person name="Jakt M."/>
            <person name="Kanapin A."/>
            <person name="Katoh M."/>
            <person name="Kawasawa Y."/>
            <person name="Kelso J."/>
            <person name="Kitamura H."/>
            <person name="Kitano H."/>
            <person name="Kollias G."/>
            <person name="Krishnan S.P."/>
            <person name="Kruger A."/>
            <person name="Kummerfeld S.K."/>
            <person name="Kurochkin I.V."/>
            <person name="Lareau L.F."/>
            <person name="Lazarevic D."/>
            <person name="Lipovich L."/>
            <person name="Liu J."/>
            <person name="Liuni S."/>
            <person name="McWilliam S."/>
            <person name="Madan Babu M."/>
            <person name="Madera M."/>
            <person name="Marchionni L."/>
            <person name="Matsuda H."/>
            <person name="Matsuzawa S."/>
            <person name="Miki H."/>
            <person name="Mignone F."/>
            <person name="Miyake S."/>
            <person name="Morris K."/>
            <person name="Mottagui-Tabar S."/>
            <person name="Mulder N."/>
            <person name="Nakano N."/>
            <person name="Nakauchi H."/>
            <person name="Ng P."/>
            <person name="Nilsson R."/>
            <person name="Nishiguchi S."/>
            <person name="Nishikawa S."/>
            <person name="Nori F."/>
            <person name="Ohara O."/>
            <person name="Okazaki Y."/>
            <person name="Orlando V."/>
            <person name="Pang K.C."/>
            <person name="Pavan W.J."/>
            <person name="Pavesi G."/>
            <person name="Pesole G."/>
            <person name="Petrovsky N."/>
            <person name="Piazza S."/>
            <person name="Reed J."/>
            <person name="Reid J.F."/>
            <person name="Ring B.Z."/>
            <person name="Ringwald M."/>
            <person name="Rost B."/>
            <person name="Ruan Y."/>
            <person name="Salzberg S.L."/>
            <person name="Sandelin A."/>
            <person name="Schneider C."/>
            <person name="Schoenbach C."/>
            <person name="Sekiguchi K."/>
            <person name="Semple C.A."/>
            <person name="Seno S."/>
            <person name="Sessa L."/>
            <person name="Sheng Y."/>
            <person name="Shibata Y."/>
            <person name="Shimada H."/>
            <person name="Shimada K."/>
            <person name="Silva D."/>
            <person name="Sinclair B."/>
            <person name="Sperling S."/>
            <person name="Stupka E."/>
            <person name="Sugiura K."/>
            <person name="Sultana R."/>
            <person name="Takenaka Y."/>
            <person name="Taki K."/>
            <person name="Tammoja K."/>
            <person name="Tan S.L."/>
            <person name="Tang S."/>
            <person name="Taylor M.S."/>
            <person name="Tegner J."/>
            <person name="Teichmann S.A."/>
            <person name="Ueda H.R."/>
            <person name="van Nimwegen E."/>
            <person name="Verardo R."/>
            <person name="Wei C.L."/>
            <person name="Yagi K."/>
            <person name="Yamanishi H."/>
            <person name="Zabarovsky E."/>
            <person name="Zhu S."/>
            <person name="Zimmer A."/>
            <person name="Hide W."/>
            <person name="Bult C."/>
            <person name="Grimmond S.M."/>
            <person name="Teasdale R.D."/>
            <person name="Liu E.T."/>
            <person name="Brusic V."/>
            <person name="Quackenbush J."/>
            <person name="Wahlestedt C."/>
            <person name="Mattick J.S."/>
            <person name="Hume D.A."/>
            <person name="Kai C."/>
            <person name="Sasaki D."/>
            <person name="Tomaru Y."/>
            <person name="Fukuda S."/>
            <person name="Kanamori-Katayama M."/>
            <person name="Suzuki M."/>
            <person name="Aoki J."/>
            <person name="Arakawa T."/>
            <person name="Iida J."/>
            <person name="Imamura K."/>
            <person name="Itoh M."/>
            <person name="Kato T."/>
            <person name="Kawaji H."/>
            <person name="Kawagashira N."/>
            <person name="Kawashima T."/>
            <person name="Kojima M."/>
            <person name="Kondo S."/>
            <person name="Konno H."/>
            <person name="Nakano K."/>
            <person name="Ninomiya N."/>
            <person name="Nishio T."/>
            <person name="Okada M."/>
            <person name="Plessy C."/>
            <person name="Shibata K."/>
            <person name="Shiraki T."/>
            <person name="Suzuki S."/>
            <person name="Tagami M."/>
            <person name="Waki K."/>
            <person name="Watahiki A."/>
            <person name="Okamura-Oho Y."/>
            <person name="Suzuki H."/>
            <person name="Kawai J."/>
            <person name="Hayashizaki Y."/>
        </authorList>
    </citation>
    <scope>NUCLEOTIDE SEQUENCE [LARGE SCALE MRNA]</scope>
    <source>
        <strain>C57BL/6J</strain>
        <tissue>Embryo</tissue>
    </source>
</reference>
<reference key="2">
    <citation type="journal article" date="2004" name="Genome Res.">
        <title>The status, quality, and expansion of the NIH full-length cDNA project: the Mammalian Gene Collection (MGC).</title>
        <authorList>
            <consortium name="The MGC Project Team"/>
        </authorList>
    </citation>
    <scope>NUCLEOTIDE SEQUENCE [LARGE SCALE MRNA]</scope>
</reference>
<reference key="3">
    <citation type="journal article" date="2010" name="Biochem. Biophys. Res. Commun.">
        <title>The mammalian INO80 complex is recruited to DNA damage sites in an ARP8 dependent manner.</title>
        <authorList>
            <person name="Kashiwaba S."/>
            <person name="Kitahashi K."/>
            <person name="Watanabe T."/>
            <person name="Onoda F."/>
            <person name="Ohtsu M."/>
            <person name="Murakami Y."/>
        </authorList>
    </citation>
    <scope>FUNCTION</scope>
</reference>
<keyword id="KW-0007">Acetylation</keyword>
<keyword id="KW-0067">ATP-binding</keyword>
<keyword id="KW-0131">Cell cycle</keyword>
<keyword id="KW-0132">Cell division</keyword>
<keyword id="KW-0158">Chromosome</keyword>
<keyword id="KW-0227">DNA damage</keyword>
<keyword id="KW-0233">DNA recombination</keyword>
<keyword id="KW-0234">DNA repair</keyword>
<keyword id="KW-0498">Mitosis</keyword>
<keyword id="KW-0547">Nucleotide-binding</keyword>
<keyword id="KW-0539">Nucleus</keyword>
<keyword id="KW-0597">Phosphoprotein</keyword>
<keyword id="KW-1185">Reference proteome</keyword>
<keyword id="KW-0804">Transcription</keyword>
<keyword id="KW-0805">Transcription regulation</keyword>
<name>ARP8_MOUSE</name>
<dbReference type="EMBL" id="AK017815">
    <property type="protein sequence ID" value="BAB30952.1"/>
    <property type="molecule type" value="mRNA"/>
</dbReference>
<dbReference type="EMBL" id="BC027281">
    <property type="protein sequence ID" value="AAH27281.1"/>
    <property type="molecule type" value="mRNA"/>
</dbReference>
<dbReference type="CCDS" id="CCDS26891.1"/>
<dbReference type="RefSeq" id="NP_081769.2">
    <property type="nucleotide sequence ID" value="NM_027493.3"/>
</dbReference>
<dbReference type="RefSeq" id="XP_030103757.1">
    <property type="nucleotide sequence ID" value="XM_030247897.1"/>
</dbReference>
<dbReference type="SMR" id="Q8R2S9"/>
<dbReference type="BioGRID" id="207864">
    <property type="interactions" value="2"/>
</dbReference>
<dbReference type="ComplexPortal" id="CPX-878">
    <property type="entry name" value="INO80 chromatin remodeling complex"/>
</dbReference>
<dbReference type="FunCoup" id="Q8R2S9">
    <property type="interactions" value="3920"/>
</dbReference>
<dbReference type="IntAct" id="Q8R2S9">
    <property type="interactions" value="1"/>
</dbReference>
<dbReference type="MINT" id="Q8R2S9"/>
<dbReference type="STRING" id="10090.ENSMUSP00000153076"/>
<dbReference type="iPTMnet" id="Q8R2S9"/>
<dbReference type="PhosphoSitePlus" id="Q8R2S9"/>
<dbReference type="SwissPalm" id="Q8R2S9"/>
<dbReference type="jPOST" id="Q8R2S9"/>
<dbReference type="PaxDb" id="10090-ENSMUSP00000016115"/>
<dbReference type="PeptideAtlas" id="Q8R2S9"/>
<dbReference type="ProteomicsDB" id="265105"/>
<dbReference type="Pumba" id="Q8R2S9"/>
<dbReference type="Antibodypedia" id="31436">
    <property type="antibodies" value="50 antibodies from 15 providers"/>
</dbReference>
<dbReference type="DNASU" id="56249"/>
<dbReference type="Ensembl" id="ENSMUST00000016115.6">
    <property type="protein sequence ID" value="ENSMUSP00000016115.5"/>
    <property type="gene ID" value="ENSMUSG00000015971.6"/>
</dbReference>
<dbReference type="Ensembl" id="ENSMUST00000224797.2">
    <property type="protein sequence ID" value="ENSMUSP00000153076.2"/>
    <property type="gene ID" value="ENSMUSG00000015971.6"/>
</dbReference>
<dbReference type="GeneID" id="56249"/>
<dbReference type="KEGG" id="mmu:56249"/>
<dbReference type="UCSC" id="uc007sum.2">
    <property type="organism name" value="mouse"/>
</dbReference>
<dbReference type="AGR" id="MGI:1860775"/>
<dbReference type="CTD" id="93973"/>
<dbReference type="MGI" id="MGI:1860775">
    <property type="gene designation" value="Actr8"/>
</dbReference>
<dbReference type="VEuPathDB" id="HostDB:ENSMUSG00000015971"/>
<dbReference type="eggNOG" id="KOG0797">
    <property type="taxonomic scope" value="Eukaryota"/>
</dbReference>
<dbReference type="GeneTree" id="ENSGT00390000001763"/>
<dbReference type="HOGENOM" id="CLU_006974_1_0_1"/>
<dbReference type="InParanoid" id="Q8R2S9"/>
<dbReference type="OMA" id="AYKCMWA"/>
<dbReference type="OrthoDB" id="5572108at2759"/>
<dbReference type="PhylomeDB" id="Q8R2S9"/>
<dbReference type="TreeFam" id="TF324575"/>
<dbReference type="Reactome" id="R-MMU-5689603">
    <property type="pathway name" value="UCH proteinases"/>
</dbReference>
<dbReference type="Reactome" id="R-MMU-5696394">
    <property type="pathway name" value="DNA Damage Recognition in GG-NER"/>
</dbReference>
<dbReference type="BioGRID-ORCS" id="56249">
    <property type="hits" value="18 hits in 114 CRISPR screens"/>
</dbReference>
<dbReference type="PRO" id="PR:Q8R2S9"/>
<dbReference type="Proteomes" id="UP000000589">
    <property type="component" value="Chromosome 14"/>
</dbReference>
<dbReference type="RNAct" id="Q8R2S9">
    <property type="molecule type" value="protein"/>
</dbReference>
<dbReference type="Bgee" id="ENSMUSG00000015971">
    <property type="expression patterns" value="Expressed in embryonic brain and 255 other cell types or tissues"/>
</dbReference>
<dbReference type="ExpressionAtlas" id="Q8R2S9">
    <property type="expression patterns" value="baseline and differential"/>
</dbReference>
<dbReference type="GO" id="GO:0005813">
    <property type="term" value="C:centrosome"/>
    <property type="evidence" value="ECO:0007669"/>
    <property type="project" value="Ensembl"/>
</dbReference>
<dbReference type="GO" id="GO:0031011">
    <property type="term" value="C:Ino80 complex"/>
    <property type="evidence" value="ECO:0000266"/>
    <property type="project" value="ComplexPortal"/>
</dbReference>
<dbReference type="GO" id="GO:0005654">
    <property type="term" value="C:nucleoplasm"/>
    <property type="evidence" value="ECO:0007669"/>
    <property type="project" value="Ensembl"/>
</dbReference>
<dbReference type="GO" id="GO:0005524">
    <property type="term" value="F:ATP binding"/>
    <property type="evidence" value="ECO:0007669"/>
    <property type="project" value="UniProtKB-KW"/>
</dbReference>
<dbReference type="GO" id="GO:0051301">
    <property type="term" value="P:cell division"/>
    <property type="evidence" value="ECO:0007669"/>
    <property type="project" value="UniProtKB-KW"/>
</dbReference>
<dbReference type="GO" id="GO:0006338">
    <property type="term" value="P:chromatin remodeling"/>
    <property type="evidence" value="ECO:0000266"/>
    <property type="project" value="ComplexPortal"/>
</dbReference>
<dbReference type="GO" id="GO:0006310">
    <property type="term" value="P:DNA recombination"/>
    <property type="evidence" value="ECO:0007669"/>
    <property type="project" value="UniProtKB-KW"/>
</dbReference>
<dbReference type="GO" id="GO:0006281">
    <property type="term" value="P:DNA repair"/>
    <property type="evidence" value="ECO:0007669"/>
    <property type="project" value="UniProtKB-KW"/>
</dbReference>
<dbReference type="GO" id="GO:0045739">
    <property type="term" value="P:positive regulation of DNA repair"/>
    <property type="evidence" value="ECO:0000314"/>
    <property type="project" value="ComplexPortal"/>
</dbReference>
<dbReference type="GO" id="GO:0045893">
    <property type="term" value="P:positive regulation of DNA-templated transcription"/>
    <property type="evidence" value="ECO:0000266"/>
    <property type="project" value="ComplexPortal"/>
</dbReference>
<dbReference type="GO" id="GO:1904507">
    <property type="term" value="P:positive regulation of telomere maintenance in response to DNA damage"/>
    <property type="evidence" value="ECO:0000315"/>
    <property type="project" value="ComplexPortal"/>
</dbReference>
<dbReference type="GO" id="GO:0051726">
    <property type="term" value="P:regulation of cell cycle"/>
    <property type="evidence" value="ECO:0000266"/>
    <property type="project" value="ComplexPortal"/>
</dbReference>
<dbReference type="GO" id="GO:0033044">
    <property type="term" value="P:regulation of chromosome organization"/>
    <property type="evidence" value="ECO:0000266"/>
    <property type="project" value="ComplexPortal"/>
</dbReference>
<dbReference type="GO" id="GO:0006282">
    <property type="term" value="P:regulation of DNA repair"/>
    <property type="evidence" value="ECO:0000314"/>
    <property type="project" value="ComplexPortal"/>
</dbReference>
<dbReference type="GO" id="GO:0006275">
    <property type="term" value="P:regulation of DNA replication"/>
    <property type="evidence" value="ECO:0000266"/>
    <property type="project" value="ComplexPortal"/>
</dbReference>
<dbReference type="GO" id="GO:0060382">
    <property type="term" value="P:regulation of DNA strand elongation"/>
    <property type="evidence" value="ECO:0000266"/>
    <property type="project" value="ComplexPortal"/>
</dbReference>
<dbReference type="GO" id="GO:0045995">
    <property type="term" value="P:regulation of embryonic development"/>
    <property type="evidence" value="ECO:0000315"/>
    <property type="project" value="ComplexPortal"/>
</dbReference>
<dbReference type="GO" id="GO:0000723">
    <property type="term" value="P:telomere maintenance"/>
    <property type="evidence" value="ECO:0000315"/>
    <property type="project" value="ComplexPortal"/>
</dbReference>
<dbReference type="CDD" id="cd10206">
    <property type="entry name" value="ASKHA_NBD_Arp8-like"/>
    <property type="match status" value="1"/>
</dbReference>
<dbReference type="FunFam" id="3.30.420.40:FF:000100">
    <property type="entry name" value="Actin-related protein 8"/>
    <property type="match status" value="1"/>
</dbReference>
<dbReference type="FunFam" id="3.30.420.40:FF:000134">
    <property type="entry name" value="Actin-related protein 8"/>
    <property type="match status" value="1"/>
</dbReference>
<dbReference type="FunFam" id="3.90.640.10:FF:000020">
    <property type="entry name" value="Actin-related protein 8"/>
    <property type="match status" value="1"/>
</dbReference>
<dbReference type="Gene3D" id="2.30.36.90">
    <property type="match status" value="1"/>
</dbReference>
<dbReference type="Gene3D" id="3.30.420.40">
    <property type="match status" value="2"/>
</dbReference>
<dbReference type="Gene3D" id="3.90.640.10">
    <property type="entry name" value="Actin, Chain A, domain 4"/>
    <property type="match status" value="1"/>
</dbReference>
<dbReference type="InterPro" id="IPR004000">
    <property type="entry name" value="Actin"/>
</dbReference>
<dbReference type="InterPro" id="IPR043129">
    <property type="entry name" value="ATPase_NBD"/>
</dbReference>
<dbReference type="PANTHER" id="PTHR11937">
    <property type="entry name" value="ACTIN"/>
    <property type="match status" value="1"/>
</dbReference>
<dbReference type="Pfam" id="PF00022">
    <property type="entry name" value="Actin"/>
    <property type="match status" value="2"/>
</dbReference>
<dbReference type="SMART" id="SM00268">
    <property type="entry name" value="ACTIN"/>
    <property type="match status" value="1"/>
</dbReference>
<dbReference type="SUPFAM" id="SSF53067">
    <property type="entry name" value="Actin-like ATPase domain"/>
    <property type="match status" value="2"/>
</dbReference>
<gene>
    <name type="primary">Actr8</name>
    <name type="synonym">Arp8</name>
</gene>
<comment type="function">
    <text evidence="1">Plays an important role in the functional organization of mitotic chromosomes. Exhibits low basal ATPase activity, and unable to polymerize (By similarity).</text>
</comment>
<comment type="function">
    <text evidence="1">Proposed core component of the chromatin remodeling INO80 complex which is involved in transcriptional regulation, DNA replication and probably DNA repair. Required for the recruitment of INO80 (and probably the INO80 complex) to sites of DNA damage Strongly prefer nucleosomes and H3-H4 tetramers over H2A-H2B dimers, suggesting it may act as a nucleosome recognition module within the complex (By similarity).</text>
</comment>
<comment type="subunit">
    <text evidence="1">Component of the chromatin remodeling INO80 complex; specifically part of a complex module associated with the DBINO domain of INO80. Exists as monomers and dimers, but the dimer is most probably the biologically relevant form required for stable interactions with histones that exploits the twofold symmetry of the nucleosome core (By similarity).</text>
</comment>
<comment type="subcellular location">
    <subcellularLocation>
        <location evidence="1">Nucleus</location>
    </subcellularLocation>
    <subcellularLocation>
        <location evidence="1">Chromosome</location>
    </subcellularLocation>
    <text evidence="1">Specifically localizes to mitotic chromosomes.</text>
</comment>
<comment type="similarity">
    <text evidence="4">Belongs to the actin family. ARP8 subfamily.</text>
</comment>
<sequence>MTQAEKGDAENGKEKGGEKEKEQRGVKRPIVPALVPESLQEQIQSNFIVVIHPGSTTLRLGRATDTLPVSVPHVIARRHKQQGQPLYKDNWLLREGLNKPESNEQRQNGLKMVDQAIWSKKMSNGTRRIPVSPEQTRSYNKQMRPAILDHCSGNKWTNTSQQPEYLVGEEALYVNPLDCYNIHWPIRRGQLNIHPGPGGSLTAVLADIEVIWSHAIQKYLEIPLKDLKYYRCILLIPDIYNKQHVKELVHMILMKMGFAGIVVHQESVCATFGSGLSSTCVVDVGDQKTSVCCVEDGVSHRNTRLCLAYGGSDVSRCFYWLMQRAGFPYRECQLTNKMDCLLLQHLKETFCHLDQDISGLQDHEFQIRHPDSPALLYQFRLGDEKLQAPMALFYPATFGIVGQKMTTLQHRSQGDPEDPHDEHYLLATQSKQEQSAKATADRKSASKPIGFEGDLRGQSSDLPERLHSQEVDLASSQGDCLMAGNESEEALTALMSRKTAISLFEGKALGLDKAILHSVDCCSSDDTKKKMYSSILVVGGGLMFHKAQEFLQHRILNKMPPSFRRIIENVDVITRPKDMDPRLIAWKGGAVLACLDTTQELWIYQREWQRFGVRMLRERAAFVW</sequence>
<organism>
    <name type="scientific">Mus musculus</name>
    <name type="common">Mouse</name>
    <dbReference type="NCBI Taxonomy" id="10090"/>
    <lineage>
        <taxon>Eukaryota</taxon>
        <taxon>Metazoa</taxon>
        <taxon>Chordata</taxon>
        <taxon>Craniata</taxon>
        <taxon>Vertebrata</taxon>
        <taxon>Euteleostomi</taxon>
        <taxon>Mammalia</taxon>
        <taxon>Eutheria</taxon>
        <taxon>Euarchontoglires</taxon>
        <taxon>Glires</taxon>
        <taxon>Rodentia</taxon>
        <taxon>Myomorpha</taxon>
        <taxon>Muroidea</taxon>
        <taxon>Muridae</taxon>
        <taxon>Murinae</taxon>
        <taxon>Mus</taxon>
        <taxon>Mus</taxon>
    </lineage>
</organism>
<evidence type="ECO:0000250" key="1"/>
<evidence type="ECO:0000250" key="2">
    <source>
        <dbReference type="UniProtKB" id="Q9H981"/>
    </source>
</evidence>
<evidence type="ECO:0000256" key="3">
    <source>
        <dbReference type="SAM" id="MobiDB-lite"/>
    </source>
</evidence>
<evidence type="ECO:0000305" key="4"/>
<feature type="chain" id="PRO_0000089124" description="Actin-related protein 8">
    <location>
        <begin position="1"/>
        <end position="624"/>
    </location>
</feature>
<feature type="region of interest" description="Disordered" evidence="3">
    <location>
        <begin position="1"/>
        <end position="29"/>
    </location>
</feature>
<feature type="region of interest" description="Disordered" evidence="3">
    <location>
        <begin position="430"/>
        <end position="462"/>
    </location>
</feature>
<feature type="compositionally biased region" description="Basic and acidic residues" evidence="3">
    <location>
        <begin position="1"/>
        <end position="25"/>
    </location>
</feature>
<feature type="binding site" evidence="1">
    <location>
        <position position="55"/>
    </location>
    <ligand>
        <name>ATP</name>
        <dbReference type="ChEBI" id="CHEBI:30616"/>
    </ligand>
</feature>
<feature type="binding site" evidence="1">
    <location>
        <position position="56"/>
    </location>
    <ligand>
        <name>ATP</name>
        <dbReference type="ChEBI" id="CHEBI:30616"/>
    </ligand>
</feature>
<feature type="binding site" evidence="1">
    <location>
        <begin position="283"/>
        <end position="286"/>
    </location>
    <ligand>
        <name>ATP</name>
        <dbReference type="ChEBI" id="CHEBI:30616"/>
    </ligand>
</feature>
<feature type="modified residue" description="N-acetylmethionine" evidence="2">
    <location>
        <position position="1"/>
    </location>
</feature>
<feature type="modified residue" description="Phosphoserine" evidence="2">
    <location>
        <position position="132"/>
    </location>
</feature>
<feature type="modified residue" description="Phosphoserine" evidence="2">
    <location>
        <position position="412"/>
    </location>
</feature>
<feature type="sequence conflict" description="In Ref. 1; BAB30952." evidence="4" ref="1">
    <original>R</original>
    <variation>G</variation>
    <location>
        <position position="127"/>
    </location>
</feature>